<gene>
    <name type="primary">mntA</name>
    <name type="ordered locus">sll1599</name>
</gene>
<name>MNTA_SYNY3</name>
<organism>
    <name type="scientific">Synechocystis sp. (strain ATCC 27184 / PCC 6803 / Kazusa)</name>
    <dbReference type="NCBI Taxonomy" id="1111708"/>
    <lineage>
        <taxon>Bacteria</taxon>
        <taxon>Bacillati</taxon>
        <taxon>Cyanobacteriota</taxon>
        <taxon>Cyanophyceae</taxon>
        <taxon>Synechococcales</taxon>
        <taxon>Merismopediaceae</taxon>
        <taxon>Synechocystis</taxon>
    </lineage>
</organism>
<evidence type="ECO:0000255" key="1">
    <source>
        <dbReference type="PROSITE-ProRule" id="PRU00434"/>
    </source>
</evidence>
<evidence type="ECO:0000305" key="2"/>
<sequence length="260" mass="28721">MAATLSRLDISVDGVSVTYNNARLALYNATCTVEPGTITALVGPNGSGKSTLFKSIMGFLQPSQGRVRIGGFSVQKAQKQQLMAYVPQADEVDWNFPVSVFDVVMMGRYGYMNVLRIPSAKDRRLVMESLERVGMVKYRDRQIGELSGGQKKRAFLARALAQEGKVILLDEPFTGVDVKTEKGMIDLLMELRDEGHTILISTHDLASISTFCDHTILLNRTILAQGKTEETFTKENLELTFGGLPMLSLNQMFESTEVDA</sequence>
<protein>
    <recommendedName>
        <fullName>Manganese transport system ATP-binding protein MntA</fullName>
    </recommendedName>
</protein>
<comment type="function">
    <text>Part of an ATP-driven transport system for manganese.</text>
</comment>
<comment type="similarity">
    <text evidence="2">Belongs to the ABC transporter superfamily.</text>
</comment>
<keyword id="KW-0067">ATP-binding</keyword>
<keyword id="KW-0464">Manganese</keyword>
<keyword id="KW-0547">Nucleotide-binding</keyword>
<keyword id="KW-1185">Reference proteome</keyword>
<keyword id="KW-0813">Transport</keyword>
<dbReference type="EMBL" id="L34630">
    <property type="protein sequence ID" value="AAA68931.1"/>
    <property type="molecule type" value="Genomic_DNA"/>
</dbReference>
<dbReference type="EMBL" id="BA000022">
    <property type="protein sequence ID" value="BAA17918.1"/>
    <property type="molecule type" value="Genomic_DNA"/>
</dbReference>
<dbReference type="SMR" id="Q55281"/>
<dbReference type="FunCoup" id="Q55281">
    <property type="interactions" value="126"/>
</dbReference>
<dbReference type="IntAct" id="Q55281">
    <property type="interactions" value="3"/>
</dbReference>
<dbReference type="STRING" id="1148.gene:10498787"/>
<dbReference type="TCDB" id="3.A.1.15.1">
    <property type="family name" value="the atp-binding cassette (abc) superfamily"/>
</dbReference>
<dbReference type="PaxDb" id="1148-1653001"/>
<dbReference type="EnsemblBacteria" id="BAA17918">
    <property type="protein sequence ID" value="BAA17918"/>
    <property type="gene ID" value="BAA17918"/>
</dbReference>
<dbReference type="KEGG" id="syn:sll1599"/>
<dbReference type="eggNOG" id="COG1121">
    <property type="taxonomic scope" value="Bacteria"/>
</dbReference>
<dbReference type="InParanoid" id="Q55281"/>
<dbReference type="PhylomeDB" id="Q55281"/>
<dbReference type="Proteomes" id="UP000001425">
    <property type="component" value="Chromosome"/>
</dbReference>
<dbReference type="GO" id="GO:0043190">
    <property type="term" value="C:ATP-binding cassette (ABC) transporter complex"/>
    <property type="evidence" value="ECO:0000318"/>
    <property type="project" value="GO_Central"/>
</dbReference>
<dbReference type="GO" id="GO:0005524">
    <property type="term" value="F:ATP binding"/>
    <property type="evidence" value="ECO:0007669"/>
    <property type="project" value="UniProtKB-KW"/>
</dbReference>
<dbReference type="GO" id="GO:0016887">
    <property type="term" value="F:ATP hydrolysis activity"/>
    <property type="evidence" value="ECO:0007669"/>
    <property type="project" value="InterPro"/>
</dbReference>
<dbReference type="GO" id="GO:0042626">
    <property type="term" value="F:ATPase-coupled transmembrane transporter activity"/>
    <property type="evidence" value="ECO:0000318"/>
    <property type="project" value="GO_Central"/>
</dbReference>
<dbReference type="CDD" id="cd03235">
    <property type="entry name" value="ABC_Metallic_Cations"/>
    <property type="match status" value="1"/>
</dbReference>
<dbReference type="FunFam" id="3.40.50.300:FF:000134">
    <property type="entry name" value="Iron-enterobactin ABC transporter ATP-binding protein"/>
    <property type="match status" value="1"/>
</dbReference>
<dbReference type="Gene3D" id="3.40.50.300">
    <property type="entry name" value="P-loop containing nucleotide triphosphate hydrolases"/>
    <property type="match status" value="1"/>
</dbReference>
<dbReference type="InterPro" id="IPR003593">
    <property type="entry name" value="AAA+_ATPase"/>
</dbReference>
<dbReference type="InterPro" id="IPR003439">
    <property type="entry name" value="ABC_transporter-like_ATP-bd"/>
</dbReference>
<dbReference type="InterPro" id="IPR017871">
    <property type="entry name" value="ABC_transporter-like_CS"/>
</dbReference>
<dbReference type="InterPro" id="IPR050153">
    <property type="entry name" value="Metal_Ion_Import_ABC"/>
</dbReference>
<dbReference type="InterPro" id="IPR027417">
    <property type="entry name" value="P-loop_NTPase"/>
</dbReference>
<dbReference type="PANTHER" id="PTHR42734:SF5">
    <property type="entry name" value="IRON TRANSPORT SYSTEM ATP-BINDING PROTEIN HI_0361-RELATED"/>
    <property type="match status" value="1"/>
</dbReference>
<dbReference type="PANTHER" id="PTHR42734">
    <property type="entry name" value="METAL TRANSPORT SYSTEM ATP-BINDING PROTEIN TM_0124-RELATED"/>
    <property type="match status" value="1"/>
</dbReference>
<dbReference type="Pfam" id="PF00005">
    <property type="entry name" value="ABC_tran"/>
    <property type="match status" value="1"/>
</dbReference>
<dbReference type="SMART" id="SM00382">
    <property type="entry name" value="AAA"/>
    <property type="match status" value="1"/>
</dbReference>
<dbReference type="SUPFAM" id="SSF52540">
    <property type="entry name" value="P-loop containing nucleoside triphosphate hydrolases"/>
    <property type="match status" value="1"/>
</dbReference>
<dbReference type="PROSITE" id="PS00211">
    <property type="entry name" value="ABC_TRANSPORTER_1"/>
    <property type="match status" value="1"/>
</dbReference>
<dbReference type="PROSITE" id="PS50893">
    <property type="entry name" value="ABC_TRANSPORTER_2"/>
    <property type="match status" value="1"/>
</dbReference>
<reference key="1">
    <citation type="journal article" date="1995" name="EMBO J.">
        <title>Molecular identification of an ABC transporter complex for manganese: analysis of a cyanobacterial mutant strain impaired in the photosynthetic oxygen evolution process.</title>
        <authorList>
            <person name="Bartsevich V.V."/>
            <person name="Pakrasi H.B."/>
        </authorList>
    </citation>
    <scope>NUCLEOTIDE SEQUENCE [GENOMIC DNA]</scope>
</reference>
<reference key="2">
    <citation type="journal article" date="1996" name="DNA Res.">
        <title>Sequence analysis of the genome of the unicellular cyanobacterium Synechocystis sp. strain PCC6803. II. Sequence determination of the entire genome and assignment of potential protein-coding regions.</title>
        <authorList>
            <person name="Kaneko T."/>
            <person name="Sato S."/>
            <person name="Kotani H."/>
            <person name="Tanaka A."/>
            <person name="Asamizu E."/>
            <person name="Nakamura Y."/>
            <person name="Miyajima N."/>
            <person name="Hirosawa M."/>
            <person name="Sugiura M."/>
            <person name="Sasamoto S."/>
            <person name="Kimura T."/>
            <person name="Hosouchi T."/>
            <person name="Matsuno A."/>
            <person name="Muraki A."/>
            <person name="Nakazaki N."/>
            <person name="Naruo K."/>
            <person name="Okumura S."/>
            <person name="Shimpo S."/>
            <person name="Takeuchi C."/>
            <person name="Wada T."/>
            <person name="Watanabe A."/>
            <person name="Yamada M."/>
            <person name="Yasuda M."/>
            <person name="Tabata S."/>
        </authorList>
    </citation>
    <scope>NUCLEOTIDE SEQUENCE [LARGE SCALE GENOMIC DNA]</scope>
    <source>
        <strain>ATCC 27184 / PCC 6803 / Kazusa</strain>
    </source>
</reference>
<feature type="chain" id="PRO_0000092522" description="Manganese transport system ATP-binding protein MntA">
    <location>
        <begin position="1"/>
        <end position="260"/>
    </location>
</feature>
<feature type="domain" description="ABC transporter" evidence="1">
    <location>
        <begin position="10"/>
        <end position="245"/>
    </location>
</feature>
<feature type="binding site" evidence="1">
    <location>
        <begin position="43"/>
        <end position="50"/>
    </location>
    <ligand>
        <name>ATP</name>
        <dbReference type="ChEBI" id="CHEBI:30616"/>
    </ligand>
</feature>
<proteinExistence type="inferred from homology"/>
<accession>Q55281</accession>